<name>GT252_HUMAN</name>
<organism>
    <name type="scientific">Homo sapiens</name>
    <name type="common">Human</name>
    <dbReference type="NCBI Taxonomy" id="9606"/>
    <lineage>
        <taxon>Eukaryota</taxon>
        <taxon>Metazoa</taxon>
        <taxon>Chordata</taxon>
        <taxon>Craniata</taxon>
        <taxon>Vertebrata</taxon>
        <taxon>Euteleostomi</taxon>
        <taxon>Mammalia</taxon>
        <taxon>Eutheria</taxon>
        <taxon>Euarchontoglires</taxon>
        <taxon>Primates</taxon>
        <taxon>Haplorrhini</taxon>
        <taxon>Catarrhini</taxon>
        <taxon>Hominidae</taxon>
        <taxon>Homo</taxon>
    </lineage>
</organism>
<sequence length="626" mass="72924">MAARPAATLAWSLLLLSSALLREGCRARFVAERDSEDDGEEPVVFPESPLQSPTVLVAVLARNAAHTLPHFLGCLERLDYPKSRMAIWAATDHNVDNTTEIFREWLKNVQRLYHYVEWRPMDEPESYPDEIGPKHWPTSRFAHVMKLRQAALRTAREKWSDYILFIDVDNFLTNPQTLNLLIAENKTIVAPMLESRGLYSNFWCGITPKGFYKRTPDYVQIREWKRTGCFPVPMVHSTFLIDLRKEASDKLTFYPPHQDYTWTFDDIIVFAFSSRQAGIQMYLCNREHYGYLPIPLKPHQTLQEDIENLIHVQIEAMIDRPPMEPSQYVSVVPKYPDKMGFDEIFMINLKRRKDRRDRMLRTLYEQEIEVKIVEAVDGKALNTSQLKALNIEMLPGYRDPYSSRPLTRGEIGCFLSHYSVWKEVIDRELEKTLVIEDDVRFEHQFKKKLMKLMDNIDQAQLDWELIYIGRKRMQVKEPEKAVPNVANLVEADYSYWTLGYVISLEGAQKLVGANPFGKMLPVDEFLPVMYNKHPVAEYKEYYESRDLKAFSAEPLLIYPTHYTGQPGYLSDTETSTIWDNETVATDWDRTHAWKSRKQSRIYSNAKNTEALPPPTSLDTVPSRDEL</sequence>
<proteinExistence type="evidence at protein level"/>
<dbReference type="EC" id="2.4.1.50" evidence="5"/>
<dbReference type="EMBL" id="AF288389">
    <property type="protein sequence ID" value="AAG60609.1"/>
    <property type="molecule type" value="mRNA"/>
</dbReference>
<dbReference type="EMBL" id="AB011156">
    <property type="protein sequence ID" value="BAA25510.1"/>
    <property type="status" value="ALT_INIT"/>
    <property type="molecule type" value="mRNA"/>
</dbReference>
<dbReference type="EMBL" id="AL592299">
    <property type="status" value="NOT_ANNOTATED_CDS"/>
    <property type="molecule type" value="Genomic_DNA"/>
</dbReference>
<dbReference type="EMBL" id="AL157943">
    <property type="status" value="NOT_ANNOTATED_CDS"/>
    <property type="molecule type" value="Genomic_DNA"/>
</dbReference>
<dbReference type="EMBL" id="CH471067">
    <property type="protein sequence ID" value="EAW91172.1"/>
    <property type="molecule type" value="Genomic_DNA"/>
</dbReference>
<dbReference type="EMBL" id="BC035672">
    <property type="protein sequence ID" value="AAH35672.1"/>
    <property type="molecule type" value="mRNA"/>
</dbReference>
<dbReference type="CCDS" id="CCDS1360.1"/>
<dbReference type="PIR" id="T00343">
    <property type="entry name" value="T00343"/>
</dbReference>
<dbReference type="RefSeq" id="NP_001290349.1">
    <property type="nucleotide sequence ID" value="NM_001303420.1"/>
</dbReference>
<dbReference type="RefSeq" id="NP_001290350.1">
    <property type="nucleotide sequence ID" value="NM_001303421.1"/>
</dbReference>
<dbReference type="RefSeq" id="NP_055916.1">
    <property type="nucleotide sequence ID" value="NM_015101.4"/>
</dbReference>
<dbReference type="SMR" id="Q8IYK4"/>
<dbReference type="BioGRID" id="116746">
    <property type="interactions" value="67"/>
</dbReference>
<dbReference type="FunCoup" id="Q8IYK4">
    <property type="interactions" value="439"/>
</dbReference>
<dbReference type="IntAct" id="Q8IYK4">
    <property type="interactions" value="57"/>
</dbReference>
<dbReference type="MINT" id="Q8IYK4"/>
<dbReference type="STRING" id="9606.ENSP00000354960"/>
<dbReference type="CAZy" id="GT25">
    <property type="family name" value="Glycosyltransferase Family 25"/>
</dbReference>
<dbReference type="GlyConnect" id="1632">
    <property type="glycosylation" value="1 N-Linked glycan (1 site)"/>
</dbReference>
<dbReference type="GlyCosmos" id="Q8IYK4">
    <property type="glycosylation" value="4 sites, 1 glycan"/>
</dbReference>
<dbReference type="GlyGen" id="Q8IYK4">
    <property type="glycosylation" value="4 sites, 6 N-linked glycans (2 sites)"/>
</dbReference>
<dbReference type="iPTMnet" id="Q8IYK4"/>
<dbReference type="PhosphoSitePlus" id="Q8IYK4"/>
<dbReference type="BioMuta" id="COLGALT2"/>
<dbReference type="DMDM" id="74750765"/>
<dbReference type="jPOST" id="Q8IYK4"/>
<dbReference type="MassIVE" id="Q8IYK4"/>
<dbReference type="PaxDb" id="9606-ENSP00000354960"/>
<dbReference type="PeptideAtlas" id="Q8IYK4"/>
<dbReference type="ProteomicsDB" id="71192"/>
<dbReference type="Pumba" id="Q8IYK4"/>
<dbReference type="Antibodypedia" id="34449">
    <property type="antibodies" value="150 antibodies from 21 providers"/>
</dbReference>
<dbReference type="DNASU" id="23127"/>
<dbReference type="Ensembl" id="ENST00000361927.9">
    <property type="protein sequence ID" value="ENSP00000354960.4"/>
    <property type="gene ID" value="ENSG00000198756.12"/>
</dbReference>
<dbReference type="GeneID" id="23127"/>
<dbReference type="KEGG" id="hsa:23127"/>
<dbReference type="MANE-Select" id="ENST00000361927.9">
    <property type="protein sequence ID" value="ENSP00000354960.4"/>
    <property type="RefSeq nucleotide sequence ID" value="NM_015101.4"/>
    <property type="RefSeq protein sequence ID" value="NP_055916.1"/>
</dbReference>
<dbReference type="UCSC" id="uc001gqr.4">
    <property type="organism name" value="human"/>
</dbReference>
<dbReference type="AGR" id="HGNC:16790"/>
<dbReference type="CTD" id="23127"/>
<dbReference type="DisGeNET" id="23127"/>
<dbReference type="GeneCards" id="COLGALT2"/>
<dbReference type="HGNC" id="HGNC:16790">
    <property type="gene designation" value="COLGALT2"/>
</dbReference>
<dbReference type="HPA" id="ENSG00000198756">
    <property type="expression patterns" value="Tissue enhanced (brain)"/>
</dbReference>
<dbReference type="MIM" id="617533">
    <property type="type" value="gene"/>
</dbReference>
<dbReference type="neXtProt" id="NX_Q8IYK4"/>
<dbReference type="OpenTargets" id="ENSG00000198756"/>
<dbReference type="PharmGKB" id="PA25606"/>
<dbReference type="VEuPathDB" id="HostDB:ENSG00000198756"/>
<dbReference type="eggNOG" id="KOG4179">
    <property type="taxonomic scope" value="Eukaryota"/>
</dbReference>
<dbReference type="GeneTree" id="ENSGT01030000234558"/>
<dbReference type="HOGENOM" id="CLU_024037_2_0_1"/>
<dbReference type="InParanoid" id="Q8IYK4"/>
<dbReference type="OMA" id="QRVYHYV"/>
<dbReference type="OrthoDB" id="47375at2759"/>
<dbReference type="PAN-GO" id="Q8IYK4">
    <property type="GO annotations" value="1 GO annotation based on evolutionary models"/>
</dbReference>
<dbReference type="PhylomeDB" id="Q8IYK4"/>
<dbReference type="TreeFam" id="TF313826"/>
<dbReference type="BioCyc" id="MetaCyc:G66-33947-MONOMER"/>
<dbReference type="BRENDA" id="2.4.1.50">
    <property type="organism ID" value="2681"/>
</dbReference>
<dbReference type="PathwayCommons" id="Q8IYK4"/>
<dbReference type="Reactome" id="R-HSA-1650814">
    <property type="pathway name" value="Collagen biosynthesis and modifying enzymes"/>
</dbReference>
<dbReference type="SABIO-RK" id="Q8IYK4"/>
<dbReference type="SignaLink" id="Q8IYK4"/>
<dbReference type="SIGNOR" id="Q8IYK4"/>
<dbReference type="BioGRID-ORCS" id="23127">
    <property type="hits" value="11 hits in 1160 CRISPR screens"/>
</dbReference>
<dbReference type="ChiTaRS" id="COLGALT2">
    <property type="organism name" value="human"/>
</dbReference>
<dbReference type="GenomeRNAi" id="23127"/>
<dbReference type="Pharos" id="Q8IYK4">
    <property type="development level" value="Tbio"/>
</dbReference>
<dbReference type="PRO" id="PR:Q8IYK4"/>
<dbReference type="Proteomes" id="UP000005640">
    <property type="component" value="Chromosome 1"/>
</dbReference>
<dbReference type="RNAct" id="Q8IYK4">
    <property type="molecule type" value="protein"/>
</dbReference>
<dbReference type="Bgee" id="ENSG00000198756">
    <property type="expression patterns" value="Expressed in tibia and 171 other cell types or tissues"/>
</dbReference>
<dbReference type="ExpressionAtlas" id="Q8IYK4">
    <property type="expression patterns" value="baseline and differential"/>
</dbReference>
<dbReference type="GO" id="GO:0005788">
    <property type="term" value="C:endoplasmic reticulum lumen"/>
    <property type="evidence" value="ECO:0000304"/>
    <property type="project" value="Reactome"/>
</dbReference>
<dbReference type="GO" id="GO:0050211">
    <property type="term" value="F:procollagen galactosyltransferase activity"/>
    <property type="evidence" value="ECO:0000318"/>
    <property type="project" value="GO_Central"/>
</dbReference>
<dbReference type="GO" id="GO:0030199">
    <property type="term" value="P:collagen fibril organization"/>
    <property type="evidence" value="ECO:0000304"/>
    <property type="project" value="Reactome"/>
</dbReference>
<dbReference type="CDD" id="cd00761">
    <property type="entry name" value="Glyco_tranf_GTA_type"/>
    <property type="match status" value="1"/>
</dbReference>
<dbReference type="CDD" id="cd06532">
    <property type="entry name" value="Glyco_transf_25"/>
    <property type="match status" value="1"/>
</dbReference>
<dbReference type="FunFam" id="3.90.550.10:FF:000048">
    <property type="entry name" value="Glycosyltransferase 25 family member 1"/>
    <property type="match status" value="1"/>
</dbReference>
<dbReference type="Gene3D" id="3.90.550.10">
    <property type="entry name" value="Spore Coat Polysaccharide Biosynthesis Protein SpsA, Chain A"/>
    <property type="match status" value="1"/>
</dbReference>
<dbReference type="InterPro" id="IPR050757">
    <property type="entry name" value="Collagen_mod_GT25"/>
</dbReference>
<dbReference type="InterPro" id="IPR002654">
    <property type="entry name" value="Glyco_trans_25"/>
</dbReference>
<dbReference type="InterPro" id="IPR029044">
    <property type="entry name" value="Nucleotide-diphossugar_trans"/>
</dbReference>
<dbReference type="PANTHER" id="PTHR10730:SF8">
    <property type="entry name" value="PROCOLLAGEN GALACTOSYLTRANSFERASE 2"/>
    <property type="match status" value="1"/>
</dbReference>
<dbReference type="PANTHER" id="PTHR10730">
    <property type="entry name" value="PROCOLLAGEN-LYSINE,2-OXOGLUTARATE 5-DIOXYGENASE/GLYCOSYLTRANSFERASE 25 FAMILY MEMBER"/>
    <property type="match status" value="1"/>
</dbReference>
<dbReference type="Pfam" id="PF13704">
    <property type="entry name" value="Glyco_tranf_2_4"/>
    <property type="match status" value="1"/>
</dbReference>
<dbReference type="Pfam" id="PF01755">
    <property type="entry name" value="Glyco_transf_25"/>
    <property type="match status" value="1"/>
</dbReference>
<dbReference type="SUPFAM" id="SSF53448">
    <property type="entry name" value="Nucleotide-diphospho-sugar transferases"/>
    <property type="match status" value="1"/>
</dbReference>
<dbReference type="PROSITE" id="PS00014">
    <property type="entry name" value="ER_TARGET"/>
    <property type="match status" value="1"/>
</dbReference>
<feature type="signal peptide" evidence="1">
    <location>
        <begin position="1"/>
        <end position="27"/>
    </location>
</feature>
<feature type="chain" id="PRO_0000309541" description="Procollagen galactosyltransferase 2">
    <location>
        <begin position="28"/>
        <end position="626"/>
    </location>
</feature>
<feature type="region of interest" description="Disordered" evidence="3">
    <location>
        <begin position="604"/>
        <end position="626"/>
    </location>
</feature>
<feature type="short sequence motif" description="Prevents secretion from ER" evidence="2">
    <location>
        <begin position="623"/>
        <end position="626"/>
    </location>
</feature>
<feature type="glycosylation site" description="N-linked (GlcNAc...) asparagine" evidence="1">
    <location>
        <position position="97"/>
    </location>
</feature>
<feature type="glycosylation site" description="N-linked (GlcNAc...) asparagine" evidence="1">
    <location>
        <position position="185"/>
    </location>
</feature>
<feature type="glycosylation site" description="N-linked (GlcNAc...) asparagine" evidence="1">
    <location>
        <position position="382"/>
    </location>
</feature>
<feature type="glycosylation site" description="N-linked (GlcNAc...) asparagine" evidence="1">
    <location>
        <position position="580"/>
    </location>
</feature>
<feature type="sequence variant" id="VAR_036978" description="In a breast cancer sample; somatic mutation; dbSNP:rs1670086756." evidence="4">
    <original>V</original>
    <variation>I</variation>
    <location>
        <position position="475"/>
    </location>
</feature>
<protein>
    <recommendedName>
        <fullName>Procollagen galactosyltransferase 2</fullName>
        <ecNumber evidence="5">2.4.1.50</ecNumber>
    </recommendedName>
    <alternativeName>
        <fullName>Collagen beta(1-O)galactosyltransferase 2</fullName>
        <shortName>ColGalT 2</shortName>
    </alternativeName>
    <alternativeName>
        <fullName>Glycosyltransferase 25 family member 2</fullName>
    </alternativeName>
    <alternativeName>
        <fullName>Hydroxylysine galactosyltransferase 2</fullName>
    </alternativeName>
</protein>
<keyword id="KW-0256">Endoplasmic reticulum</keyword>
<keyword id="KW-0325">Glycoprotein</keyword>
<keyword id="KW-0328">Glycosyltransferase</keyword>
<keyword id="KW-1267">Proteomics identification</keyword>
<keyword id="KW-1185">Reference proteome</keyword>
<keyword id="KW-0732">Signal</keyword>
<keyword id="KW-0808">Transferase</keyword>
<evidence type="ECO:0000255" key="1"/>
<evidence type="ECO:0000255" key="2">
    <source>
        <dbReference type="PROSITE-ProRule" id="PRU10138"/>
    </source>
</evidence>
<evidence type="ECO:0000256" key="3">
    <source>
        <dbReference type="SAM" id="MobiDB-lite"/>
    </source>
</evidence>
<evidence type="ECO:0000269" key="4">
    <source>
    </source>
</evidence>
<evidence type="ECO:0000269" key="5">
    <source>
    </source>
</evidence>
<evidence type="ECO:0000305" key="6"/>
<reference key="1">
    <citation type="journal article" date="2001" name="Genomics">
        <title>Cloning and characterization of 13 novel transcripts and the human RGS8 gene from the 1q25 region encompassing the hereditary prostate cancer (HPC1) locus.</title>
        <authorList>
            <person name="Sood R."/>
            <person name="Bonner T.I."/>
            <person name="Malakowska I."/>
            <person name="Stephan D.A."/>
            <person name="Robbins C.M."/>
            <person name="Connors T.D."/>
            <person name="Morgenbesser S.D."/>
            <person name="Su K."/>
            <person name="Faruque M.U."/>
            <person name="Pinkett H."/>
            <person name="Graham C."/>
            <person name="Baxevanis A.D."/>
            <person name="Klinger K.W."/>
            <person name="Landes G.M."/>
            <person name="Trent J.M."/>
            <person name="Carpten J.D."/>
        </authorList>
    </citation>
    <scope>NUCLEOTIDE SEQUENCE [MRNA]</scope>
</reference>
<reference key="2">
    <citation type="journal article" date="1998" name="DNA Res.">
        <title>Prediction of the coding sequences of unidentified human genes. IX. The complete sequences of 100 new cDNA clones from brain which can code for large proteins in vitro.</title>
        <authorList>
            <person name="Nagase T."/>
            <person name="Ishikawa K."/>
            <person name="Miyajima N."/>
            <person name="Tanaka A."/>
            <person name="Kotani H."/>
            <person name="Nomura N."/>
            <person name="Ohara O."/>
        </authorList>
    </citation>
    <scope>NUCLEOTIDE SEQUENCE [LARGE SCALE MRNA]</scope>
    <source>
        <tissue>Brain</tissue>
    </source>
</reference>
<reference key="3">
    <citation type="journal article" date="2006" name="Nature">
        <title>The DNA sequence and biological annotation of human chromosome 1.</title>
        <authorList>
            <person name="Gregory S.G."/>
            <person name="Barlow K.F."/>
            <person name="McLay K.E."/>
            <person name="Kaul R."/>
            <person name="Swarbreck D."/>
            <person name="Dunham A."/>
            <person name="Scott C.E."/>
            <person name="Howe K.L."/>
            <person name="Woodfine K."/>
            <person name="Spencer C.C.A."/>
            <person name="Jones M.C."/>
            <person name="Gillson C."/>
            <person name="Searle S."/>
            <person name="Zhou Y."/>
            <person name="Kokocinski F."/>
            <person name="McDonald L."/>
            <person name="Evans R."/>
            <person name="Phillips K."/>
            <person name="Atkinson A."/>
            <person name="Cooper R."/>
            <person name="Jones C."/>
            <person name="Hall R.E."/>
            <person name="Andrews T.D."/>
            <person name="Lloyd C."/>
            <person name="Ainscough R."/>
            <person name="Almeida J.P."/>
            <person name="Ambrose K.D."/>
            <person name="Anderson F."/>
            <person name="Andrew R.W."/>
            <person name="Ashwell R.I.S."/>
            <person name="Aubin K."/>
            <person name="Babbage A.K."/>
            <person name="Bagguley C.L."/>
            <person name="Bailey J."/>
            <person name="Beasley H."/>
            <person name="Bethel G."/>
            <person name="Bird C.P."/>
            <person name="Bray-Allen S."/>
            <person name="Brown J.Y."/>
            <person name="Brown A.J."/>
            <person name="Buckley D."/>
            <person name="Burton J."/>
            <person name="Bye J."/>
            <person name="Carder C."/>
            <person name="Chapman J.C."/>
            <person name="Clark S.Y."/>
            <person name="Clarke G."/>
            <person name="Clee C."/>
            <person name="Cobley V."/>
            <person name="Collier R.E."/>
            <person name="Corby N."/>
            <person name="Coville G.J."/>
            <person name="Davies J."/>
            <person name="Deadman R."/>
            <person name="Dunn M."/>
            <person name="Earthrowl M."/>
            <person name="Ellington A.G."/>
            <person name="Errington H."/>
            <person name="Frankish A."/>
            <person name="Frankland J."/>
            <person name="French L."/>
            <person name="Garner P."/>
            <person name="Garnett J."/>
            <person name="Gay L."/>
            <person name="Ghori M.R.J."/>
            <person name="Gibson R."/>
            <person name="Gilby L.M."/>
            <person name="Gillett W."/>
            <person name="Glithero R.J."/>
            <person name="Grafham D.V."/>
            <person name="Griffiths C."/>
            <person name="Griffiths-Jones S."/>
            <person name="Grocock R."/>
            <person name="Hammond S."/>
            <person name="Harrison E.S.I."/>
            <person name="Hart E."/>
            <person name="Haugen E."/>
            <person name="Heath P.D."/>
            <person name="Holmes S."/>
            <person name="Holt K."/>
            <person name="Howden P.J."/>
            <person name="Hunt A.R."/>
            <person name="Hunt S.E."/>
            <person name="Hunter G."/>
            <person name="Isherwood J."/>
            <person name="James R."/>
            <person name="Johnson C."/>
            <person name="Johnson D."/>
            <person name="Joy A."/>
            <person name="Kay M."/>
            <person name="Kershaw J.K."/>
            <person name="Kibukawa M."/>
            <person name="Kimberley A.M."/>
            <person name="King A."/>
            <person name="Knights A.J."/>
            <person name="Lad H."/>
            <person name="Laird G."/>
            <person name="Lawlor S."/>
            <person name="Leongamornlert D.A."/>
            <person name="Lloyd D.M."/>
            <person name="Loveland J."/>
            <person name="Lovell J."/>
            <person name="Lush M.J."/>
            <person name="Lyne R."/>
            <person name="Martin S."/>
            <person name="Mashreghi-Mohammadi M."/>
            <person name="Matthews L."/>
            <person name="Matthews N.S.W."/>
            <person name="McLaren S."/>
            <person name="Milne S."/>
            <person name="Mistry S."/>
            <person name="Moore M.J.F."/>
            <person name="Nickerson T."/>
            <person name="O'Dell C.N."/>
            <person name="Oliver K."/>
            <person name="Palmeiri A."/>
            <person name="Palmer S.A."/>
            <person name="Parker A."/>
            <person name="Patel D."/>
            <person name="Pearce A.V."/>
            <person name="Peck A.I."/>
            <person name="Pelan S."/>
            <person name="Phelps K."/>
            <person name="Phillimore B.J."/>
            <person name="Plumb R."/>
            <person name="Rajan J."/>
            <person name="Raymond C."/>
            <person name="Rouse G."/>
            <person name="Saenphimmachak C."/>
            <person name="Sehra H.K."/>
            <person name="Sheridan E."/>
            <person name="Shownkeen R."/>
            <person name="Sims S."/>
            <person name="Skuce C.D."/>
            <person name="Smith M."/>
            <person name="Steward C."/>
            <person name="Subramanian S."/>
            <person name="Sycamore N."/>
            <person name="Tracey A."/>
            <person name="Tromans A."/>
            <person name="Van Helmond Z."/>
            <person name="Wall M."/>
            <person name="Wallis J.M."/>
            <person name="White S."/>
            <person name="Whitehead S.L."/>
            <person name="Wilkinson J.E."/>
            <person name="Willey D.L."/>
            <person name="Williams H."/>
            <person name="Wilming L."/>
            <person name="Wray P.W."/>
            <person name="Wu Z."/>
            <person name="Coulson A."/>
            <person name="Vaudin M."/>
            <person name="Sulston J.E."/>
            <person name="Durbin R.M."/>
            <person name="Hubbard T."/>
            <person name="Wooster R."/>
            <person name="Dunham I."/>
            <person name="Carter N.P."/>
            <person name="McVean G."/>
            <person name="Ross M.T."/>
            <person name="Harrow J."/>
            <person name="Olson M.V."/>
            <person name="Beck S."/>
            <person name="Rogers J."/>
            <person name="Bentley D.R."/>
        </authorList>
    </citation>
    <scope>NUCLEOTIDE SEQUENCE [LARGE SCALE GENOMIC DNA]</scope>
</reference>
<reference key="4">
    <citation type="submission" date="2005-07" db="EMBL/GenBank/DDBJ databases">
        <authorList>
            <person name="Mural R.J."/>
            <person name="Istrail S."/>
            <person name="Sutton G.G."/>
            <person name="Florea L."/>
            <person name="Halpern A.L."/>
            <person name="Mobarry C.M."/>
            <person name="Lippert R."/>
            <person name="Walenz B."/>
            <person name="Shatkay H."/>
            <person name="Dew I."/>
            <person name="Miller J.R."/>
            <person name="Flanigan M.J."/>
            <person name="Edwards N.J."/>
            <person name="Bolanos R."/>
            <person name="Fasulo D."/>
            <person name="Halldorsson B.V."/>
            <person name="Hannenhalli S."/>
            <person name="Turner R."/>
            <person name="Yooseph S."/>
            <person name="Lu F."/>
            <person name="Nusskern D.R."/>
            <person name="Shue B.C."/>
            <person name="Zheng X.H."/>
            <person name="Zhong F."/>
            <person name="Delcher A.L."/>
            <person name="Huson D.H."/>
            <person name="Kravitz S.A."/>
            <person name="Mouchard L."/>
            <person name="Reinert K."/>
            <person name="Remington K.A."/>
            <person name="Clark A.G."/>
            <person name="Waterman M.S."/>
            <person name="Eichler E.E."/>
            <person name="Adams M.D."/>
            <person name="Hunkapiller M.W."/>
            <person name="Myers E.W."/>
            <person name="Venter J.C."/>
        </authorList>
    </citation>
    <scope>NUCLEOTIDE SEQUENCE [LARGE SCALE GENOMIC DNA]</scope>
</reference>
<reference key="5">
    <citation type="journal article" date="2004" name="Genome Res.">
        <title>The status, quality, and expansion of the NIH full-length cDNA project: the Mammalian Gene Collection (MGC).</title>
        <authorList>
            <consortium name="The MGC Project Team"/>
        </authorList>
    </citation>
    <scope>NUCLEOTIDE SEQUENCE [LARGE SCALE MRNA]</scope>
    <source>
        <tissue>Duodenum</tissue>
    </source>
</reference>
<reference key="6">
    <citation type="journal article" date="2009" name="Mol. Cell. Biol.">
        <title>Core glycosylation of collagen is initiated by two beta(1-O)galactosyltransferases.</title>
        <authorList>
            <person name="Schegg B."/>
            <person name="Huelsmeier A.J."/>
            <person name="Rutschmann C."/>
            <person name="Maag C."/>
            <person name="Hennet T."/>
        </authorList>
    </citation>
    <scope>FUNCTION</scope>
    <scope>BIOPHYSICOCHEMICAL PROPERTIES</scope>
    <scope>CATALYTIC ACTIVITY</scope>
    <scope>TISSUE SPECIFICITY</scope>
</reference>
<reference key="7">
    <citation type="journal article" date="2011" name="BMC Syst. Biol.">
        <title>Initial characterization of the human central proteome.</title>
        <authorList>
            <person name="Burkard T.R."/>
            <person name="Planyavsky M."/>
            <person name="Kaupe I."/>
            <person name="Breitwieser F.P."/>
            <person name="Buerckstuemmer T."/>
            <person name="Bennett K.L."/>
            <person name="Superti-Furga G."/>
            <person name="Colinge J."/>
        </authorList>
    </citation>
    <scope>IDENTIFICATION BY MASS SPECTROMETRY [LARGE SCALE ANALYSIS]</scope>
</reference>
<reference key="8">
    <citation type="journal article" date="2006" name="Science">
        <title>The consensus coding sequences of human breast and colorectal cancers.</title>
        <authorList>
            <person name="Sjoeblom T."/>
            <person name="Jones S."/>
            <person name="Wood L.D."/>
            <person name="Parsons D.W."/>
            <person name="Lin J."/>
            <person name="Barber T.D."/>
            <person name="Mandelker D."/>
            <person name="Leary R.J."/>
            <person name="Ptak J."/>
            <person name="Silliman N."/>
            <person name="Szabo S."/>
            <person name="Buckhaults P."/>
            <person name="Farrell C."/>
            <person name="Meeh P."/>
            <person name="Markowitz S.D."/>
            <person name="Willis J."/>
            <person name="Dawson D."/>
            <person name="Willson J.K.V."/>
            <person name="Gazdar A.F."/>
            <person name="Hartigan J."/>
            <person name="Wu L."/>
            <person name="Liu C."/>
            <person name="Parmigiani G."/>
            <person name="Park B.H."/>
            <person name="Bachman K.E."/>
            <person name="Papadopoulos N."/>
            <person name="Vogelstein B."/>
            <person name="Kinzler K.W."/>
            <person name="Velculescu V.E."/>
        </authorList>
    </citation>
    <scope>VARIANT [LARGE SCALE ANALYSIS] ILE-475</scope>
</reference>
<accession>Q8IYK4</accession>
<accession>O60327</accession>
<accession>Q9BZR0</accession>
<comment type="function">
    <text evidence="5">Beta-galactosyltransferase that transfers beta-galactose to hydroxylysine residues of collagen.</text>
</comment>
<comment type="catalytic activity">
    <reaction evidence="5">
        <text>(5R)-5-hydroxy-L-lysyl-[collagen] + UDP-alpha-D-galactose = (5R)-5-O-(beta-D-galactosyl)-5-hydroxy-L-lysyl-[collagen] + UDP + H(+)</text>
        <dbReference type="Rhea" id="RHEA:12637"/>
        <dbReference type="Rhea" id="RHEA-COMP:12752"/>
        <dbReference type="Rhea" id="RHEA-COMP:12753"/>
        <dbReference type="ChEBI" id="CHEBI:15378"/>
        <dbReference type="ChEBI" id="CHEBI:58223"/>
        <dbReference type="ChEBI" id="CHEBI:66914"/>
        <dbReference type="ChEBI" id="CHEBI:133442"/>
        <dbReference type="ChEBI" id="CHEBI:133443"/>
        <dbReference type="EC" id="2.4.1.50"/>
    </reaction>
</comment>
<comment type="biophysicochemical properties">
    <kinetics>
        <KM evidence="5">33.5 uM for UDP-galactose</KM>
    </kinetics>
</comment>
<comment type="interaction">
    <interactant intactId="EBI-10263496">
        <id>Q8IYK4</id>
    </interactant>
    <interactant intactId="EBI-10697546">
        <id>Q9BXJ4</id>
        <label>C1QTNF3</label>
    </interactant>
    <organismsDiffer>false</organismsDiffer>
    <experiments>2</experiments>
</comment>
<comment type="interaction">
    <interactant intactId="EBI-10263496">
        <id>Q8IYK4</id>
    </interactant>
    <interactant intactId="EBI-749311">
        <id>P37235</id>
        <label>HPCAL1</label>
    </interactant>
    <organismsDiffer>false</organismsDiffer>
    <experiments>4</experiments>
</comment>
<comment type="interaction">
    <interactant intactId="EBI-10263496">
        <id>Q8IYK4</id>
    </interactant>
    <interactant intactId="EBI-953955">
        <id>P04279</id>
        <label>SEMG1</label>
    </interactant>
    <organismsDiffer>false</organismsDiffer>
    <experiments>2</experiments>
</comment>
<comment type="interaction">
    <interactant intactId="EBI-10263496">
        <id>Q8IYK4</id>
    </interactant>
    <interactant intactId="EBI-10173939">
        <id>Q9UMX0-2</id>
        <label>UBQLN1</label>
    </interactant>
    <organismsDiffer>false</organismsDiffer>
    <experiments>3</experiments>
</comment>
<comment type="interaction">
    <interactant intactId="EBI-10263496">
        <id>Q8IYK4</id>
    </interactant>
    <interactant intactId="EBI-947187">
        <id>Q9UHD9</id>
        <label>UBQLN2</label>
    </interactant>
    <organismsDiffer>false</organismsDiffer>
    <experiments>3</experiments>
</comment>
<comment type="subcellular location">
    <subcellularLocation>
        <location evidence="2">Endoplasmic reticulum lumen</location>
    </subcellularLocation>
</comment>
<comment type="tissue specificity">
    <text evidence="5">Expressed in brain and skeletal muscle.</text>
</comment>
<comment type="similarity">
    <text evidence="6">Belongs to the glycosyltransferase 25 family.</text>
</comment>
<comment type="caution">
    <text evidence="6">Has no glucosyltransferase activity.</text>
</comment>
<comment type="sequence caution" evidence="6">
    <conflict type="erroneous initiation">
        <sequence resource="EMBL-CDS" id="BAA25510"/>
    </conflict>
    <text>Extended N-terminus.</text>
</comment>
<gene>
    <name type="primary">COLGALT2</name>
    <name type="synonym">C1orf17</name>
    <name type="synonym">GLT25D2</name>
    <name type="synonym">KIAA0584</name>
</gene>